<dbReference type="EC" id="3.1.-.-" evidence="1"/>
<dbReference type="EMBL" id="CP000946">
    <property type="protein sequence ID" value="ACA76437.1"/>
    <property type="molecule type" value="Genomic_DNA"/>
</dbReference>
<dbReference type="BMRB" id="B1IT58"/>
<dbReference type="SMR" id="B1IT58"/>
<dbReference type="KEGG" id="ecl:EcolC_0765"/>
<dbReference type="HOGENOM" id="CLU_098240_3_0_6"/>
<dbReference type="GO" id="GO:0005829">
    <property type="term" value="C:cytosol"/>
    <property type="evidence" value="ECO:0007669"/>
    <property type="project" value="TreeGrafter"/>
</dbReference>
<dbReference type="GO" id="GO:0004518">
    <property type="term" value="F:nuclease activity"/>
    <property type="evidence" value="ECO:0007669"/>
    <property type="project" value="UniProtKB-KW"/>
</dbReference>
<dbReference type="GO" id="GO:0000967">
    <property type="term" value="P:rRNA 5'-end processing"/>
    <property type="evidence" value="ECO:0007669"/>
    <property type="project" value="UniProtKB-UniRule"/>
</dbReference>
<dbReference type="CDD" id="cd16964">
    <property type="entry name" value="YqgF"/>
    <property type="match status" value="1"/>
</dbReference>
<dbReference type="FunFam" id="3.30.420.140:FF:000002">
    <property type="entry name" value="Putative pre-16S rRNA nuclease"/>
    <property type="match status" value="1"/>
</dbReference>
<dbReference type="Gene3D" id="3.30.420.140">
    <property type="entry name" value="YqgF/RNase H-like domain"/>
    <property type="match status" value="1"/>
</dbReference>
<dbReference type="HAMAP" id="MF_00651">
    <property type="entry name" value="Nuclease_YqgF"/>
    <property type="match status" value="1"/>
</dbReference>
<dbReference type="InterPro" id="IPR012337">
    <property type="entry name" value="RNaseH-like_sf"/>
</dbReference>
<dbReference type="InterPro" id="IPR005227">
    <property type="entry name" value="YqgF"/>
</dbReference>
<dbReference type="InterPro" id="IPR006641">
    <property type="entry name" value="YqgF/RNaseH-like_dom"/>
</dbReference>
<dbReference type="InterPro" id="IPR037027">
    <property type="entry name" value="YqgF/RNaseH-like_dom_sf"/>
</dbReference>
<dbReference type="NCBIfam" id="TIGR00250">
    <property type="entry name" value="RNAse_H_YqgF"/>
    <property type="match status" value="1"/>
</dbReference>
<dbReference type="PANTHER" id="PTHR33317">
    <property type="entry name" value="POLYNUCLEOTIDYL TRANSFERASE, RIBONUCLEASE H-LIKE SUPERFAMILY PROTEIN"/>
    <property type="match status" value="1"/>
</dbReference>
<dbReference type="PANTHER" id="PTHR33317:SF4">
    <property type="entry name" value="POLYNUCLEOTIDYL TRANSFERASE, RIBONUCLEASE H-LIKE SUPERFAMILY PROTEIN"/>
    <property type="match status" value="1"/>
</dbReference>
<dbReference type="Pfam" id="PF03652">
    <property type="entry name" value="RuvX"/>
    <property type="match status" value="1"/>
</dbReference>
<dbReference type="SMART" id="SM00732">
    <property type="entry name" value="YqgFc"/>
    <property type="match status" value="1"/>
</dbReference>
<dbReference type="SUPFAM" id="SSF53098">
    <property type="entry name" value="Ribonuclease H-like"/>
    <property type="match status" value="1"/>
</dbReference>
<accession>B1IT58</accession>
<feature type="chain" id="PRO_1000082743" description="Putative pre-16S rRNA nuclease">
    <location>
        <begin position="1"/>
        <end position="138"/>
    </location>
</feature>
<gene>
    <name evidence="1" type="primary">yqgF</name>
    <name type="ordered locus">EcolC_0765</name>
</gene>
<evidence type="ECO:0000255" key="1">
    <source>
        <dbReference type="HAMAP-Rule" id="MF_00651"/>
    </source>
</evidence>
<name>YQGF_ECOLC</name>
<organism>
    <name type="scientific">Escherichia coli (strain ATCC 8739 / DSM 1576 / NBRC 3972 / NCIMB 8545 / WDCM 00012 / Crooks)</name>
    <dbReference type="NCBI Taxonomy" id="481805"/>
    <lineage>
        <taxon>Bacteria</taxon>
        <taxon>Pseudomonadati</taxon>
        <taxon>Pseudomonadota</taxon>
        <taxon>Gammaproteobacteria</taxon>
        <taxon>Enterobacterales</taxon>
        <taxon>Enterobacteriaceae</taxon>
        <taxon>Escherichia</taxon>
    </lineage>
</organism>
<protein>
    <recommendedName>
        <fullName evidence="1">Putative pre-16S rRNA nuclease</fullName>
        <ecNumber evidence="1">3.1.-.-</ecNumber>
    </recommendedName>
</protein>
<sequence length="138" mass="15186">MSGTLLAFDFGTKSIGVAVGQRITGTARPLPAIKAQDGTPDWNIIERLLKEWQPDEIIVGLPLNMDGTEQPLTARARKFANRIHGRFGVEVKLHDERLSTVEARSGLFEQGGYRALNKGKVDSASAVIILESYFEQGY</sequence>
<reference key="1">
    <citation type="submission" date="2008-02" db="EMBL/GenBank/DDBJ databases">
        <title>Complete sequence of Escherichia coli C str. ATCC 8739.</title>
        <authorList>
            <person name="Copeland A."/>
            <person name="Lucas S."/>
            <person name="Lapidus A."/>
            <person name="Glavina del Rio T."/>
            <person name="Dalin E."/>
            <person name="Tice H."/>
            <person name="Bruce D."/>
            <person name="Goodwin L."/>
            <person name="Pitluck S."/>
            <person name="Kiss H."/>
            <person name="Brettin T."/>
            <person name="Detter J.C."/>
            <person name="Han C."/>
            <person name="Kuske C.R."/>
            <person name="Schmutz J."/>
            <person name="Larimer F."/>
            <person name="Land M."/>
            <person name="Hauser L."/>
            <person name="Kyrpides N."/>
            <person name="Mikhailova N."/>
            <person name="Ingram L."/>
            <person name="Richardson P."/>
        </authorList>
    </citation>
    <scope>NUCLEOTIDE SEQUENCE [LARGE SCALE GENOMIC DNA]</scope>
    <source>
        <strain>ATCC 8739 / DSM 1576 / NBRC 3972 / NCIMB 8545 / WDCM 00012 / Crooks</strain>
    </source>
</reference>
<keyword id="KW-0963">Cytoplasm</keyword>
<keyword id="KW-0378">Hydrolase</keyword>
<keyword id="KW-0540">Nuclease</keyword>
<keyword id="KW-0690">Ribosome biogenesis</keyword>
<proteinExistence type="inferred from homology"/>
<comment type="function">
    <text evidence="1">Could be a nuclease involved in processing of the 5'-end of pre-16S rRNA.</text>
</comment>
<comment type="subcellular location">
    <subcellularLocation>
        <location evidence="1">Cytoplasm</location>
    </subcellularLocation>
</comment>
<comment type="similarity">
    <text evidence="1">Belongs to the YqgF nuclease family.</text>
</comment>